<organism>
    <name type="scientific">Homo sapiens</name>
    <name type="common">Human</name>
    <dbReference type="NCBI Taxonomy" id="9606"/>
    <lineage>
        <taxon>Eukaryota</taxon>
        <taxon>Metazoa</taxon>
        <taxon>Chordata</taxon>
        <taxon>Craniata</taxon>
        <taxon>Vertebrata</taxon>
        <taxon>Euteleostomi</taxon>
        <taxon>Mammalia</taxon>
        <taxon>Eutheria</taxon>
        <taxon>Euarchontoglires</taxon>
        <taxon>Primates</taxon>
        <taxon>Haplorrhini</taxon>
        <taxon>Catarrhini</taxon>
        <taxon>Hominidae</taxon>
        <taxon>Homo</taxon>
    </lineage>
</organism>
<dbReference type="EMBL" id="DQ020495">
    <property type="protein sequence ID" value="AAY84832.1"/>
    <property type="molecule type" value="mRNA"/>
</dbReference>
<dbReference type="EMBL" id="AK127206">
    <property type="protein sequence ID" value="BAC86883.1"/>
    <property type="molecule type" value="mRNA"/>
</dbReference>
<dbReference type="EMBL" id="AC104782">
    <property type="status" value="NOT_ANNOTATED_CDS"/>
    <property type="molecule type" value="Genomic_DNA"/>
</dbReference>
<dbReference type="EMBL" id="AC012493">
    <property type="status" value="NOT_ANNOTATED_CDS"/>
    <property type="molecule type" value="Genomic_DNA"/>
</dbReference>
<dbReference type="EMBL" id="BC101664">
    <property type="protein sequence ID" value="AAI01665.1"/>
    <property type="molecule type" value="mRNA"/>
</dbReference>
<dbReference type="EMBL" id="BC101662">
    <property type="protein sequence ID" value="AAI01663.1"/>
    <property type="molecule type" value="mRNA"/>
</dbReference>
<dbReference type="CCDS" id="CCDS2046.2">
    <molecule id="Q1L5Z9-1"/>
</dbReference>
<dbReference type="CCDS" id="CCDS92818.1">
    <molecule id="Q1L5Z9-2"/>
</dbReference>
<dbReference type="RefSeq" id="NP_001358712.1">
    <molecule id="Q1L5Z9-2"/>
    <property type="nucleotide sequence ID" value="NM_001371783.1"/>
</dbReference>
<dbReference type="RefSeq" id="NP_940863.3">
    <molecule id="Q1L5Z9-1"/>
    <property type="nucleotide sequence ID" value="NM_198461.4"/>
</dbReference>
<dbReference type="RefSeq" id="XP_047299493.1">
    <molecule id="Q1L5Z9-2"/>
    <property type="nucleotide sequence ID" value="XM_047443537.1"/>
</dbReference>
<dbReference type="SMR" id="Q1L5Z9"/>
<dbReference type="BioGRID" id="127903">
    <property type="interactions" value="25"/>
</dbReference>
<dbReference type="FunCoup" id="Q1L5Z9">
    <property type="interactions" value="162"/>
</dbReference>
<dbReference type="IntAct" id="Q1L5Z9">
    <property type="interactions" value="35"/>
</dbReference>
<dbReference type="STRING" id="9606.ENSP00000377086"/>
<dbReference type="GlyGen" id="Q1L5Z9">
    <property type="glycosylation" value="1 site, 1 O-linked glycan (1 site)"/>
</dbReference>
<dbReference type="iPTMnet" id="Q1L5Z9"/>
<dbReference type="PhosphoSitePlus" id="Q1L5Z9"/>
<dbReference type="BioMuta" id="LONRF2"/>
<dbReference type="DMDM" id="313104224"/>
<dbReference type="jPOST" id="Q1L5Z9"/>
<dbReference type="MassIVE" id="Q1L5Z9"/>
<dbReference type="PaxDb" id="9606-ENSP00000377086"/>
<dbReference type="PeptideAtlas" id="Q1L5Z9"/>
<dbReference type="ProteomicsDB" id="61220">
    <molecule id="Q1L5Z9-1"/>
</dbReference>
<dbReference type="ProteomicsDB" id="61221">
    <molecule id="Q1L5Z9-2"/>
</dbReference>
<dbReference type="Pumba" id="Q1L5Z9"/>
<dbReference type="Antibodypedia" id="32852">
    <property type="antibodies" value="87 antibodies from 18 providers"/>
</dbReference>
<dbReference type="DNASU" id="164832"/>
<dbReference type="Ensembl" id="ENST00000393437.8">
    <molecule id="Q1L5Z9-1"/>
    <property type="protein sequence ID" value="ENSP00000377086.3"/>
    <property type="gene ID" value="ENSG00000170500.13"/>
</dbReference>
<dbReference type="Ensembl" id="ENST00000409647.1">
    <molecule id="Q1L5Z9-2"/>
    <property type="protein sequence ID" value="ENSP00000386823.1"/>
    <property type="gene ID" value="ENSG00000170500.13"/>
</dbReference>
<dbReference type="GeneID" id="164832"/>
<dbReference type="KEGG" id="hsa:164832"/>
<dbReference type="MANE-Select" id="ENST00000393437.8">
    <property type="protein sequence ID" value="ENSP00000377086.3"/>
    <property type="RefSeq nucleotide sequence ID" value="NM_198461.4"/>
    <property type="RefSeq protein sequence ID" value="NP_940863.3"/>
</dbReference>
<dbReference type="UCSC" id="uc002tal.4">
    <molecule id="Q1L5Z9-1"/>
    <property type="organism name" value="human"/>
</dbReference>
<dbReference type="AGR" id="HGNC:24788"/>
<dbReference type="CTD" id="164832"/>
<dbReference type="DisGeNET" id="164832"/>
<dbReference type="GeneCards" id="LONRF2"/>
<dbReference type="HGNC" id="HGNC:24788">
    <property type="gene designation" value="LONRF2"/>
</dbReference>
<dbReference type="HPA" id="ENSG00000170500">
    <property type="expression patterns" value="Tissue enhanced (epididymis, fallopian tube)"/>
</dbReference>
<dbReference type="neXtProt" id="NX_Q1L5Z9"/>
<dbReference type="OpenTargets" id="ENSG00000170500"/>
<dbReference type="PharmGKB" id="PA142671540"/>
<dbReference type="VEuPathDB" id="HostDB:ENSG00000170500"/>
<dbReference type="eggNOG" id="KOG0508">
    <property type="taxonomic scope" value="Eukaryota"/>
</dbReference>
<dbReference type="eggNOG" id="KOG1124">
    <property type="taxonomic scope" value="Eukaryota"/>
</dbReference>
<dbReference type="eggNOG" id="KOG4159">
    <property type="taxonomic scope" value="Eukaryota"/>
</dbReference>
<dbReference type="GeneTree" id="ENSGT00440000033329"/>
<dbReference type="HOGENOM" id="CLU_013989_1_2_1"/>
<dbReference type="InParanoid" id="Q1L5Z9"/>
<dbReference type="OMA" id="PPEPLGC"/>
<dbReference type="OrthoDB" id="264917at2759"/>
<dbReference type="PAN-GO" id="Q1L5Z9">
    <property type="GO annotations" value="1 GO annotation based on evolutionary models"/>
</dbReference>
<dbReference type="PhylomeDB" id="Q1L5Z9"/>
<dbReference type="TreeFam" id="TF327043"/>
<dbReference type="PathwayCommons" id="Q1L5Z9"/>
<dbReference type="SignaLink" id="Q1L5Z9"/>
<dbReference type="SIGNOR" id="Q1L5Z9"/>
<dbReference type="BioGRID-ORCS" id="164832">
    <property type="hits" value="17 hits in 1191 CRISPR screens"/>
</dbReference>
<dbReference type="ChiTaRS" id="LONRF2">
    <property type="organism name" value="human"/>
</dbReference>
<dbReference type="GenomeRNAi" id="164832"/>
<dbReference type="Pharos" id="Q1L5Z9">
    <property type="development level" value="Tdark"/>
</dbReference>
<dbReference type="PRO" id="PR:Q1L5Z9"/>
<dbReference type="Proteomes" id="UP000005640">
    <property type="component" value="Chromosome 2"/>
</dbReference>
<dbReference type="RNAct" id="Q1L5Z9">
    <property type="molecule type" value="protein"/>
</dbReference>
<dbReference type="Bgee" id="ENSG00000170500">
    <property type="expression patterns" value="Expressed in corpus epididymis and 169 other cell types or tissues"/>
</dbReference>
<dbReference type="GO" id="GO:0005737">
    <property type="term" value="C:cytoplasm"/>
    <property type="evidence" value="ECO:0007669"/>
    <property type="project" value="UniProtKB-ARBA"/>
</dbReference>
<dbReference type="GO" id="GO:0051787">
    <property type="term" value="F:misfolded protein binding"/>
    <property type="evidence" value="ECO:0007669"/>
    <property type="project" value="Ensembl"/>
</dbReference>
<dbReference type="GO" id="GO:0043021">
    <property type="term" value="F:ribonucleoprotein complex binding"/>
    <property type="evidence" value="ECO:0007669"/>
    <property type="project" value="Ensembl"/>
</dbReference>
<dbReference type="GO" id="GO:0061630">
    <property type="term" value="F:ubiquitin protein ligase activity"/>
    <property type="evidence" value="ECO:0007669"/>
    <property type="project" value="Ensembl"/>
</dbReference>
<dbReference type="GO" id="GO:0008270">
    <property type="term" value="F:zinc ion binding"/>
    <property type="evidence" value="ECO:0007669"/>
    <property type="project" value="UniProtKB-KW"/>
</dbReference>
<dbReference type="GO" id="GO:0061744">
    <property type="term" value="P:motor behavior"/>
    <property type="evidence" value="ECO:0007669"/>
    <property type="project" value="Ensembl"/>
</dbReference>
<dbReference type="GO" id="GO:0043524">
    <property type="term" value="P:negative regulation of neuron apoptotic process"/>
    <property type="evidence" value="ECO:0007669"/>
    <property type="project" value="Ensembl"/>
</dbReference>
<dbReference type="GO" id="GO:0050905">
    <property type="term" value="P:neuromuscular process"/>
    <property type="evidence" value="ECO:0007669"/>
    <property type="project" value="Ensembl"/>
</dbReference>
<dbReference type="GO" id="GO:0051402">
    <property type="term" value="P:neuron apoptotic process"/>
    <property type="evidence" value="ECO:0007669"/>
    <property type="project" value="Ensembl"/>
</dbReference>
<dbReference type="GO" id="GO:0031175">
    <property type="term" value="P:neuron projection development"/>
    <property type="evidence" value="ECO:0007669"/>
    <property type="project" value="Ensembl"/>
</dbReference>
<dbReference type="GO" id="GO:0006515">
    <property type="term" value="P:protein quality control for misfolded or incompletely synthesized proteins"/>
    <property type="evidence" value="ECO:0007669"/>
    <property type="project" value="Ensembl"/>
</dbReference>
<dbReference type="GO" id="GO:0021522">
    <property type="term" value="P:spinal cord motor neuron differentiation"/>
    <property type="evidence" value="ECO:0007669"/>
    <property type="project" value="Ensembl"/>
</dbReference>
<dbReference type="CDD" id="cd16513">
    <property type="entry name" value="RING-HC_LONFs_rpt1"/>
    <property type="match status" value="1"/>
</dbReference>
<dbReference type="CDD" id="cd16514">
    <property type="entry name" value="RING-HC_LONFs_rpt2"/>
    <property type="match status" value="1"/>
</dbReference>
<dbReference type="Gene3D" id="2.30.130.40">
    <property type="entry name" value="LON domain-like"/>
    <property type="match status" value="1"/>
</dbReference>
<dbReference type="Gene3D" id="1.25.40.10">
    <property type="entry name" value="Tetratricopeptide repeat domain"/>
    <property type="match status" value="2"/>
</dbReference>
<dbReference type="Gene3D" id="3.30.40.10">
    <property type="entry name" value="Zinc/RING finger domain, C3HC4 (zinc finger)"/>
    <property type="match status" value="2"/>
</dbReference>
<dbReference type="InterPro" id="IPR003111">
    <property type="entry name" value="Lon_prtase_N"/>
</dbReference>
<dbReference type="InterPro" id="IPR046336">
    <property type="entry name" value="Lon_prtase_N_sf"/>
</dbReference>
<dbReference type="InterPro" id="IPR015947">
    <property type="entry name" value="PUA-like_sf"/>
</dbReference>
<dbReference type="InterPro" id="IPR011990">
    <property type="entry name" value="TPR-like_helical_dom_sf"/>
</dbReference>
<dbReference type="InterPro" id="IPR019734">
    <property type="entry name" value="TPR_rpt"/>
</dbReference>
<dbReference type="InterPro" id="IPR001841">
    <property type="entry name" value="Znf_RING"/>
</dbReference>
<dbReference type="InterPro" id="IPR013083">
    <property type="entry name" value="Znf_RING/FYVE/PHD"/>
</dbReference>
<dbReference type="InterPro" id="IPR017907">
    <property type="entry name" value="Znf_RING_CS"/>
</dbReference>
<dbReference type="PANTHER" id="PTHR23327:SF5">
    <property type="entry name" value="LON PEPTIDASE N-TERMINAL DOMAIN AND RING FINGER PROTEIN 2"/>
    <property type="match status" value="1"/>
</dbReference>
<dbReference type="PANTHER" id="PTHR23327">
    <property type="entry name" value="RING FINGER PROTEIN 127"/>
    <property type="match status" value="1"/>
</dbReference>
<dbReference type="Pfam" id="PF02190">
    <property type="entry name" value="LON_substr_bdg"/>
    <property type="match status" value="1"/>
</dbReference>
<dbReference type="Pfam" id="PF13432">
    <property type="entry name" value="TPR_16"/>
    <property type="match status" value="2"/>
</dbReference>
<dbReference type="Pfam" id="PF13923">
    <property type="entry name" value="zf-C3HC4_2"/>
    <property type="match status" value="1"/>
</dbReference>
<dbReference type="SMART" id="SM00464">
    <property type="entry name" value="LON"/>
    <property type="match status" value="1"/>
</dbReference>
<dbReference type="SMART" id="SM00184">
    <property type="entry name" value="RING"/>
    <property type="match status" value="2"/>
</dbReference>
<dbReference type="SMART" id="SM00028">
    <property type="entry name" value="TPR"/>
    <property type="match status" value="3"/>
</dbReference>
<dbReference type="SUPFAM" id="SSF88697">
    <property type="entry name" value="PUA domain-like"/>
    <property type="match status" value="1"/>
</dbReference>
<dbReference type="SUPFAM" id="SSF57850">
    <property type="entry name" value="RING/U-box"/>
    <property type="match status" value="2"/>
</dbReference>
<dbReference type="SUPFAM" id="SSF48452">
    <property type="entry name" value="TPR-like"/>
    <property type="match status" value="1"/>
</dbReference>
<dbReference type="PROSITE" id="PS51787">
    <property type="entry name" value="LON_N"/>
    <property type="match status" value="1"/>
</dbReference>
<dbReference type="PROSITE" id="PS50293">
    <property type="entry name" value="TPR_REGION"/>
    <property type="match status" value="1"/>
</dbReference>
<dbReference type="PROSITE" id="PS00518">
    <property type="entry name" value="ZF_RING_1"/>
    <property type="match status" value="1"/>
</dbReference>
<dbReference type="PROSITE" id="PS50089">
    <property type="entry name" value="ZF_RING_2"/>
    <property type="match status" value="1"/>
</dbReference>
<protein>
    <recommendedName>
        <fullName>LON peptidase N-terminal domain and RING finger protein 2</fullName>
    </recommendedName>
    <alternativeName>
        <fullName>Neuroblastoma apoptosis-related protease</fullName>
    </alternativeName>
    <alternativeName>
        <fullName>RING finger protein 192</fullName>
    </alternativeName>
</protein>
<sequence length="754" mass="83654">MSPEPVPPPPPPQCPGCDRAEPIAQRLEEGDEAFRAGDYEMAAELFRSMLAGLAQPDRGLCLRLGDALARAGRLPEALGAFRGAARLGALRPEELEELAGGLVRAVGLRDRPLSAENPGGEPEAPGEGGPAPEPRAPRDLLGCPRCRRLLHKPVTLPCGLTVCKRCVEPGPARPQVRRVNVVLSGLLEKCFPAECRLRRLAGQARSLQRQQQPEAALLRCDQALELAPDDNSLLLLRAELYLTMKNYEQALQDASAACQNEPLLIKGHQVKAQALSGLGRSKEVLKEFLYCLALNPECNSVKKEAQKVMCEVLFSATANVHENLTSSIQSRLKAQGHSHMNAQALLEEGDAGSSENSSEKSDMLGNTNSSVLYFILGLHFEEDKKALESILPTAPSAGLKRQFPDDVEDAPDLNAPGKIPKKDLSLQRSPNSETEESQGLSLDVTDFECALCMRLLFEPVTTPCGHTFCLKCLERCLDHAPHCPLCKDKLSELLASRNFNITVLAEELIFRYLPDELSDRKRIYDEEMSELSNLTRDVPIFVCAMAFPTVPCPLHVFEPRYRLMIRRCMETGTKRFGMCLSAEHAGLSEYGCMLEIKDVRTFPDGSSVVDAIGISRFRVLSHRHRDGYNTADIEYLEDEKVEGPEYEELAALHDSVHQQSVSWFASLQDRMKEQILSHFGVMPDREPEPQSNPSGPAWSWWILAVLPLERKAQLAILGMTSLKERLLAIRRILVIITRKMNSRQELANARERNN</sequence>
<proteinExistence type="evidence at protein level"/>
<evidence type="ECO:0000255" key="1">
    <source>
        <dbReference type="PROSITE-ProRule" id="PRU00175"/>
    </source>
</evidence>
<evidence type="ECO:0000255" key="2">
    <source>
        <dbReference type="PROSITE-ProRule" id="PRU01123"/>
    </source>
</evidence>
<evidence type="ECO:0000256" key="3">
    <source>
        <dbReference type="SAM" id="MobiDB-lite"/>
    </source>
</evidence>
<evidence type="ECO:0000269" key="4">
    <source>
    </source>
</evidence>
<evidence type="ECO:0000269" key="5">
    <source>
    </source>
</evidence>
<evidence type="ECO:0000269" key="6">
    <source>
    </source>
</evidence>
<evidence type="ECO:0000269" key="7">
    <source ref="1"/>
</evidence>
<evidence type="ECO:0000303" key="8">
    <source>
    </source>
</evidence>
<evidence type="ECO:0000303" key="9">
    <source>
    </source>
</evidence>
<evidence type="ECO:0000305" key="10"/>
<gene>
    <name type="primary">LONRF2</name>
    <name type="synonym">RNF192</name>
</gene>
<keyword id="KW-0025">Alternative splicing</keyword>
<keyword id="KW-0479">Metal-binding</keyword>
<keyword id="KW-1267">Proteomics identification</keyword>
<keyword id="KW-1185">Reference proteome</keyword>
<keyword id="KW-0677">Repeat</keyword>
<keyword id="KW-0802">TPR repeat</keyword>
<keyword id="KW-0862">Zinc</keyword>
<keyword id="KW-0863">Zinc-finger</keyword>
<name>LONF2_HUMAN</name>
<accession>Q1L5Z9</accession>
<accession>B9A006</accession>
<accession>Q6ZSR4</accession>
<feature type="chain" id="PRO_0000277670" description="LON peptidase N-terminal domain and RING finger protein 2">
    <location>
        <begin position="1"/>
        <end position="754"/>
    </location>
</feature>
<feature type="repeat" description="TPR 1">
    <location>
        <begin position="23"/>
        <end position="58"/>
    </location>
</feature>
<feature type="repeat" description="TPR 2">
    <location>
        <begin position="59"/>
        <end position="91"/>
    </location>
</feature>
<feature type="repeat" description="TPR 3">
    <location>
        <begin position="197"/>
        <end position="230"/>
    </location>
</feature>
<feature type="repeat" description="TPR 4">
    <location>
        <begin position="231"/>
        <end position="264"/>
    </location>
</feature>
<feature type="repeat" description="TPR 5">
    <location>
        <begin position="266"/>
        <end position="298"/>
    </location>
</feature>
<feature type="repeat" description="TPR 6">
    <location>
        <begin position="447"/>
        <end position="483"/>
    </location>
</feature>
<feature type="domain" description="Lon N-terminal" evidence="2">
    <location>
        <begin position="528"/>
        <end position="737"/>
    </location>
</feature>
<feature type="zinc finger region" description="RING-type" evidence="1">
    <location>
        <begin position="449"/>
        <end position="487"/>
    </location>
</feature>
<feature type="region of interest" description="Disordered" evidence="3">
    <location>
        <begin position="112"/>
        <end position="136"/>
    </location>
</feature>
<feature type="region of interest" description="Disordered" evidence="3">
    <location>
        <begin position="398"/>
        <end position="439"/>
    </location>
</feature>
<feature type="compositionally biased region" description="Low complexity" evidence="3">
    <location>
        <begin position="115"/>
        <end position="125"/>
    </location>
</feature>
<feature type="compositionally biased region" description="Polar residues" evidence="3">
    <location>
        <begin position="426"/>
        <end position="439"/>
    </location>
</feature>
<feature type="splice variant" id="VSP_023079" description="In isoform 2." evidence="8 9">
    <location>
        <begin position="1"/>
        <end position="243"/>
    </location>
</feature>
<feature type="sequence variant" id="VAR_030590" description="In dbSNP:rs4851287.">
    <original>L</original>
    <variation>P</variation>
    <location>
        <position position="183"/>
    </location>
</feature>
<feature type="sequence variant" id="VAR_054639" description="In dbSNP:rs4851287." evidence="4 5 7">
    <original>L</original>
    <variation>P</variation>
    <location>
        <position position="426"/>
    </location>
</feature>
<feature type="sequence variant" id="VAR_035953" description="In a colorectal cancer sample; somatic mutation; dbSNP:rs773205136." evidence="6">
    <original>R</original>
    <variation>W</variation>
    <location>
        <position position="562"/>
    </location>
</feature>
<feature type="sequence conflict" description="In Ref. 1; AAY84832." evidence="10" ref="1">
    <original>E</original>
    <variation>Q</variation>
    <location>
        <position position="648"/>
    </location>
</feature>
<reference key="1">
    <citation type="submission" date="2005-04" db="EMBL/GenBank/DDBJ databases">
        <title>Differential screening of novel gene in apoptotic neuronal cells and its functional study during embryonic development.</title>
        <authorList>
            <person name="Choi D.K."/>
        </authorList>
    </citation>
    <scope>NUCLEOTIDE SEQUENCE [MRNA] (ISOFORM 1)</scope>
    <scope>VARIANT PRO-426</scope>
</reference>
<reference key="2">
    <citation type="journal article" date="2004" name="Nat. Genet.">
        <title>Complete sequencing and characterization of 21,243 full-length human cDNAs.</title>
        <authorList>
            <person name="Ota T."/>
            <person name="Suzuki Y."/>
            <person name="Nishikawa T."/>
            <person name="Otsuki T."/>
            <person name="Sugiyama T."/>
            <person name="Irie R."/>
            <person name="Wakamatsu A."/>
            <person name="Hayashi K."/>
            <person name="Sato H."/>
            <person name="Nagai K."/>
            <person name="Kimura K."/>
            <person name="Makita H."/>
            <person name="Sekine M."/>
            <person name="Obayashi M."/>
            <person name="Nishi T."/>
            <person name="Shibahara T."/>
            <person name="Tanaka T."/>
            <person name="Ishii S."/>
            <person name="Yamamoto J."/>
            <person name="Saito K."/>
            <person name="Kawai Y."/>
            <person name="Isono Y."/>
            <person name="Nakamura Y."/>
            <person name="Nagahari K."/>
            <person name="Murakami K."/>
            <person name="Yasuda T."/>
            <person name="Iwayanagi T."/>
            <person name="Wagatsuma M."/>
            <person name="Shiratori A."/>
            <person name="Sudo H."/>
            <person name="Hosoiri T."/>
            <person name="Kaku Y."/>
            <person name="Kodaira H."/>
            <person name="Kondo H."/>
            <person name="Sugawara M."/>
            <person name="Takahashi M."/>
            <person name="Kanda K."/>
            <person name="Yokoi T."/>
            <person name="Furuya T."/>
            <person name="Kikkawa E."/>
            <person name="Omura Y."/>
            <person name="Abe K."/>
            <person name="Kamihara K."/>
            <person name="Katsuta N."/>
            <person name="Sato K."/>
            <person name="Tanikawa M."/>
            <person name="Yamazaki M."/>
            <person name="Ninomiya K."/>
            <person name="Ishibashi T."/>
            <person name="Yamashita H."/>
            <person name="Murakawa K."/>
            <person name="Fujimori K."/>
            <person name="Tanai H."/>
            <person name="Kimata M."/>
            <person name="Watanabe M."/>
            <person name="Hiraoka S."/>
            <person name="Chiba Y."/>
            <person name="Ishida S."/>
            <person name="Ono Y."/>
            <person name="Takiguchi S."/>
            <person name="Watanabe S."/>
            <person name="Yosida M."/>
            <person name="Hotuta T."/>
            <person name="Kusano J."/>
            <person name="Kanehori K."/>
            <person name="Takahashi-Fujii A."/>
            <person name="Hara H."/>
            <person name="Tanase T.-O."/>
            <person name="Nomura Y."/>
            <person name="Togiya S."/>
            <person name="Komai F."/>
            <person name="Hara R."/>
            <person name="Takeuchi K."/>
            <person name="Arita M."/>
            <person name="Imose N."/>
            <person name="Musashino K."/>
            <person name="Yuuki H."/>
            <person name="Oshima A."/>
            <person name="Sasaki N."/>
            <person name="Aotsuka S."/>
            <person name="Yoshikawa Y."/>
            <person name="Matsunawa H."/>
            <person name="Ichihara T."/>
            <person name="Shiohata N."/>
            <person name="Sano S."/>
            <person name="Moriya S."/>
            <person name="Momiyama H."/>
            <person name="Satoh N."/>
            <person name="Takami S."/>
            <person name="Terashima Y."/>
            <person name="Suzuki O."/>
            <person name="Nakagawa S."/>
            <person name="Senoh A."/>
            <person name="Mizoguchi H."/>
            <person name="Goto Y."/>
            <person name="Shimizu F."/>
            <person name="Wakebe H."/>
            <person name="Hishigaki H."/>
            <person name="Watanabe T."/>
            <person name="Sugiyama A."/>
            <person name="Takemoto M."/>
            <person name="Kawakami B."/>
            <person name="Yamazaki M."/>
            <person name="Watanabe K."/>
            <person name="Kumagai A."/>
            <person name="Itakura S."/>
            <person name="Fukuzumi Y."/>
            <person name="Fujimori Y."/>
            <person name="Komiyama M."/>
            <person name="Tashiro H."/>
            <person name="Tanigami A."/>
            <person name="Fujiwara T."/>
            <person name="Ono T."/>
            <person name="Yamada K."/>
            <person name="Fujii Y."/>
            <person name="Ozaki K."/>
            <person name="Hirao M."/>
            <person name="Ohmori Y."/>
            <person name="Kawabata A."/>
            <person name="Hikiji T."/>
            <person name="Kobatake N."/>
            <person name="Inagaki H."/>
            <person name="Ikema Y."/>
            <person name="Okamoto S."/>
            <person name="Okitani R."/>
            <person name="Kawakami T."/>
            <person name="Noguchi S."/>
            <person name="Itoh T."/>
            <person name="Shigeta K."/>
            <person name="Senba T."/>
            <person name="Matsumura K."/>
            <person name="Nakajima Y."/>
            <person name="Mizuno T."/>
            <person name="Morinaga M."/>
            <person name="Sasaki M."/>
            <person name="Togashi T."/>
            <person name="Oyama M."/>
            <person name="Hata H."/>
            <person name="Watanabe M."/>
            <person name="Komatsu T."/>
            <person name="Mizushima-Sugano J."/>
            <person name="Satoh T."/>
            <person name="Shirai Y."/>
            <person name="Takahashi Y."/>
            <person name="Nakagawa K."/>
            <person name="Okumura K."/>
            <person name="Nagase T."/>
            <person name="Nomura N."/>
            <person name="Kikuchi H."/>
            <person name="Masuho Y."/>
            <person name="Yamashita R."/>
            <person name="Nakai K."/>
            <person name="Yada T."/>
            <person name="Nakamura Y."/>
            <person name="Ohara O."/>
            <person name="Isogai T."/>
            <person name="Sugano S."/>
        </authorList>
    </citation>
    <scope>NUCLEOTIDE SEQUENCE [LARGE SCALE MRNA] (ISOFORM 2)</scope>
    <scope>VARIANT PRO-426</scope>
    <source>
        <tissue>Hippocampus</tissue>
    </source>
</reference>
<reference key="3">
    <citation type="journal article" date="2005" name="Nature">
        <title>Generation and annotation of the DNA sequences of human chromosomes 2 and 4.</title>
        <authorList>
            <person name="Hillier L.W."/>
            <person name="Graves T.A."/>
            <person name="Fulton R.S."/>
            <person name="Fulton L.A."/>
            <person name="Pepin K.H."/>
            <person name="Minx P."/>
            <person name="Wagner-McPherson C."/>
            <person name="Layman D."/>
            <person name="Wylie K."/>
            <person name="Sekhon M."/>
            <person name="Becker M.C."/>
            <person name="Fewell G.A."/>
            <person name="Delehaunty K.D."/>
            <person name="Miner T.L."/>
            <person name="Nash W.E."/>
            <person name="Kremitzki C."/>
            <person name="Oddy L."/>
            <person name="Du H."/>
            <person name="Sun H."/>
            <person name="Bradshaw-Cordum H."/>
            <person name="Ali J."/>
            <person name="Carter J."/>
            <person name="Cordes M."/>
            <person name="Harris A."/>
            <person name="Isak A."/>
            <person name="van Brunt A."/>
            <person name="Nguyen C."/>
            <person name="Du F."/>
            <person name="Courtney L."/>
            <person name="Kalicki J."/>
            <person name="Ozersky P."/>
            <person name="Abbott S."/>
            <person name="Armstrong J."/>
            <person name="Belter E.A."/>
            <person name="Caruso L."/>
            <person name="Cedroni M."/>
            <person name="Cotton M."/>
            <person name="Davidson T."/>
            <person name="Desai A."/>
            <person name="Elliott G."/>
            <person name="Erb T."/>
            <person name="Fronick C."/>
            <person name="Gaige T."/>
            <person name="Haakenson W."/>
            <person name="Haglund K."/>
            <person name="Holmes A."/>
            <person name="Harkins R."/>
            <person name="Kim K."/>
            <person name="Kruchowski S.S."/>
            <person name="Strong C.M."/>
            <person name="Grewal N."/>
            <person name="Goyea E."/>
            <person name="Hou S."/>
            <person name="Levy A."/>
            <person name="Martinka S."/>
            <person name="Mead K."/>
            <person name="McLellan M.D."/>
            <person name="Meyer R."/>
            <person name="Randall-Maher J."/>
            <person name="Tomlinson C."/>
            <person name="Dauphin-Kohlberg S."/>
            <person name="Kozlowicz-Reilly A."/>
            <person name="Shah N."/>
            <person name="Swearengen-Shahid S."/>
            <person name="Snider J."/>
            <person name="Strong J.T."/>
            <person name="Thompson J."/>
            <person name="Yoakum M."/>
            <person name="Leonard S."/>
            <person name="Pearman C."/>
            <person name="Trani L."/>
            <person name="Radionenko M."/>
            <person name="Waligorski J.E."/>
            <person name="Wang C."/>
            <person name="Rock S.M."/>
            <person name="Tin-Wollam A.-M."/>
            <person name="Maupin R."/>
            <person name="Latreille P."/>
            <person name="Wendl M.C."/>
            <person name="Yang S.-P."/>
            <person name="Pohl C."/>
            <person name="Wallis J.W."/>
            <person name="Spieth J."/>
            <person name="Bieri T.A."/>
            <person name="Berkowicz N."/>
            <person name="Nelson J.O."/>
            <person name="Osborne J."/>
            <person name="Ding L."/>
            <person name="Meyer R."/>
            <person name="Sabo A."/>
            <person name="Shotland Y."/>
            <person name="Sinha P."/>
            <person name="Wohldmann P.E."/>
            <person name="Cook L.L."/>
            <person name="Hickenbotham M.T."/>
            <person name="Eldred J."/>
            <person name="Williams D."/>
            <person name="Jones T.A."/>
            <person name="She X."/>
            <person name="Ciccarelli F.D."/>
            <person name="Izaurralde E."/>
            <person name="Taylor J."/>
            <person name="Schmutz J."/>
            <person name="Myers R.M."/>
            <person name="Cox D.R."/>
            <person name="Huang X."/>
            <person name="McPherson J.D."/>
            <person name="Mardis E.R."/>
            <person name="Clifton S.W."/>
            <person name="Warren W.C."/>
            <person name="Chinwalla A.T."/>
            <person name="Eddy S.R."/>
            <person name="Marra M.A."/>
            <person name="Ovcharenko I."/>
            <person name="Furey T.S."/>
            <person name="Miller W."/>
            <person name="Eichler E.E."/>
            <person name="Bork P."/>
            <person name="Suyama M."/>
            <person name="Torrents D."/>
            <person name="Waterston R.H."/>
            <person name="Wilson R.K."/>
        </authorList>
    </citation>
    <scope>NUCLEOTIDE SEQUENCE [LARGE SCALE GENOMIC DNA]</scope>
</reference>
<reference key="4">
    <citation type="journal article" date="2004" name="Genome Res.">
        <title>The status, quality, and expansion of the NIH full-length cDNA project: the Mammalian Gene Collection (MGC).</title>
        <authorList>
            <consortium name="The MGC Project Team"/>
        </authorList>
    </citation>
    <scope>NUCLEOTIDE SEQUENCE [LARGE SCALE MRNA] (ISOFORM 2)</scope>
    <scope>VARIANT PRO-426</scope>
    <source>
        <tissue>Brain</tissue>
    </source>
</reference>
<reference key="5">
    <citation type="journal article" date="2006" name="Science">
        <title>The consensus coding sequences of human breast and colorectal cancers.</title>
        <authorList>
            <person name="Sjoeblom T."/>
            <person name="Jones S."/>
            <person name="Wood L.D."/>
            <person name="Parsons D.W."/>
            <person name="Lin J."/>
            <person name="Barber T.D."/>
            <person name="Mandelker D."/>
            <person name="Leary R.J."/>
            <person name="Ptak J."/>
            <person name="Silliman N."/>
            <person name="Szabo S."/>
            <person name="Buckhaults P."/>
            <person name="Farrell C."/>
            <person name="Meeh P."/>
            <person name="Markowitz S.D."/>
            <person name="Willis J."/>
            <person name="Dawson D."/>
            <person name="Willson J.K.V."/>
            <person name="Gazdar A.F."/>
            <person name="Hartigan J."/>
            <person name="Wu L."/>
            <person name="Liu C."/>
            <person name="Parmigiani G."/>
            <person name="Park B.H."/>
            <person name="Bachman K.E."/>
            <person name="Papadopoulos N."/>
            <person name="Vogelstein B."/>
            <person name="Kinzler K.W."/>
            <person name="Velculescu V.E."/>
        </authorList>
    </citation>
    <scope>VARIANT [LARGE SCALE ANALYSIS] TRP-562</scope>
</reference>
<comment type="interaction">
    <interactant intactId="EBI-2510853">
        <id>Q1L5Z9</id>
    </interactant>
    <interactant intactId="EBI-718729">
        <id>P55212</id>
        <label>CASP6</label>
    </interactant>
    <organismsDiffer>false</organismsDiffer>
    <experiments>3</experiments>
</comment>
<comment type="interaction">
    <interactant intactId="EBI-2510853">
        <id>Q1L5Z9</id>
    </interactant>
    <interactant intactId="EBI-355710">
        <id>P48643</id>
        <label>CCT5</label>
    </interactant>
    <organismsDiffer>false</organismsDiffer>
    <experiments>3</experiments>
</comment>
<comment type="interaction">
    <interactant intactId="EBI-2510853">
        <id>Q1L5Z9</id>
    </interactant>
    <interactant intactId="EBI-446479">
        <id>P99999</id>
        <label>CYCS</label>
    </interactant>
    <organismsDiffer>false</organismsDiffer>
    <experiments>3</experiments>
</comment>
<comment type="interaction">
    <interactant intactId="EBI-2510853">
        <id>Q1L5Z9</id>
    </interactant>
    <interactant intactId="EBI-10976677">
        <id>G5E9A7</id>
        <label>DMWD</label>
    </interactant>
    <organismsDiffer>false</organismsDiffer>
    <experiments>3</experiments>
</comment>
<comment type="interaction">
    <interactant intactId="EBI-2510853">
        <id>Q1L5Z9</id>
    </interactant>
    <interactant intactId="EBI-348399">
        <id>P22607</id>
        <label>FGFR3</label>
    </interactant>
    <organismsDiffer>false</organismsDiffer>
    <experiments>3</experiments>
</comment>
<comment type="interaction">
    <interactant intactId="EBI-2510853">
        <id>Q1L5Z9</id>
    </interactant>
    <interactant intactId="EBI-744302">
        <id>P14136</id>
        <label>GFAP</label>
    </interactant>
    <organismsDiffer>false</organismsDiffer>
    <experiments>3</experiments>
</comment>
<comment type="interaction">
    <interactant intactId="EBI-2510853">
        <id>Q1L5Z9</id>
    </interactant>
    <interactant intactId="EBI-8285963">
        <id>Q14957</id>
        <label>GRIN2C</label>
    </interactant>
    <organismsDiffer>false</organismsDiffer>
    <experiments>3</experiments>
</comment>
<comment type="interaction">
    <interactant intactId="EBI-2510853">
        <id>Q1L5Z9</id>
    </interactant>
    <interactant intactId="EBI-351506">
        <id>P06396</id>
        <label>GSN</label>
    </interactant>
    <organismsDiffer>false</organismsDiffer>
    <experiments>3</experiments>
</comment>
<comment type="interaction">
    <interactant intactId="EBI-2510853">
        <id>Q1L5Z9</id>
    </interactant>
    <interactant intactId="EBI-517086">
        <id>O43464</id>
        <label>HTRA2</label>
    </interactant>
    <organismsDiffer>false</organismsDiffer>
    <experiments>3</experiments>
</comment>
<comment type="interaction">
    <interactant intactId="EBI-2510853">
        <id>Q1L5Z9</id>
    </interactant>
    <interactant intactId="EBI-466029">
        <id>P42858</id>
        <label>HTT</label>
    </interactant>
    <organismsDiffer>false</organismsDiffer>
    <experiments>3</experiments>
</comment>
<comment type="interaction">
    <interactant intactId="EBI-2510853">
        <id>Q1L5Z9</id>
    </interactant>
    <interactant intactId="EBI-1055254">
        <id>Q8WXH2</id>
        <label>JPH3</label>
    </interactant>
    <organismsDiffer>false</organismsDiffer>
    <experiments>3</experiments>
</comment>
<comment type="interaction">
    <interactant intactId="EBI-2510853">
        <id>Q1L5Z9</id>
    </interactant>
    <interactant intactId="EBI-21591415">
        <id>P13473-2</id>
        <label>LAMP2</label>
    </interactant>
    <organismsDiffer>false</organismsDiffer>
    <experiments>3</experiments>
</comment>
<comment type="interaction">
    <interactant intactId="EBI-2510853">
        <id>Q1L5Z9</id>
    </interactant>
    <interactant intactId="EBI-50433196">
        <id>A0A6Q8PF08</id>
        <label>PMP22</label>
    </interactant>
    <organismsDiffer>false</organismsDiffer>
    <experiments>3</experiments>
</comment>
<comment type="interaction">
    <interactant intactId="EBI-2510853">
        <id>Q1L5Z9</id>
    </interactant>
    <interactant intactId="EBI-5280197">
        <id>O75400-2</id>
        <label>PRPF40A</label>
    </interactant>
    <organismsDiffer>false</organismsDiffer>
    <experiments>3</experiments>
</comment>
<comment type="interaction">
    <interactant intactId="EBI-2510853">
        <id>Q1L5Z9</id>
    </interactant>
    <interactant intactId="EBI-5235340">
        <id>Q7Z699</id>
        <label>SPRED1</label>
    </interactant>
    <organismsDiffer>false</organismsDiffer>
    <experiments>3</experiments>
</comment>
<comment type="interaction">
    <interactant intactId="EBI-2510853">
        <id>Q1L5Z9</id>
    </interactant>
    <interactant intactId="EBI-372899">
        <id>Q13148</id>
        <label>TARDBP</label>
    </interactant>
    <organismsDiffer>false</organismsDiffer>
    <experiments>3</experiments>
</comment>
<comment type="interaction">
    <interactant intactId="EBI-2510853">
        <id>Q1L5Z9</id>
    </interactant>
    <interactant intactId="EBI-12806590">
        <id>Q86WV8</id>
        <label>TSC1</label>
    </interactant>
    <organismsDiffer>false</organismsDiffer>
    <experiments>3</experiments>
</comment>
<comment type="alternative products">
    <event type="alternative splicing"/>
    <isoform>
        <id>Q1L5Z9-1</id>
        <name>1</name>
        <sequence type="displayed"/>
    </isoform>
    <isoform>
        <id>Q1L5Z9-2</id>
        <name>2</name>
        <sequence type="described" ref="VSP_023079"/>
    </isoform>
</comment>